<comment type="function">
    <text evidence="1 2">Component of the nexin-dynein regulatory complex (N-DRC), a key regulator of ciliary/flagellar motility which maintains the alignment and integrity of the distal axoneme and regulates microtubule sliding in motile axonemes. Plays a critical role in the assembly of N-DRC and also stabilizes the assembly of multiple inner dynein arms and radial spokes. Coassembles with DRC1 to form a central scaffold needed for assembly of the N-DRC and its attachment to the outer doublet microtubules.</text>
</comment>
<comment type="subunit">
    <text evidence="1 2">Component of the nexin-dynein regulatory complex (N-DRC). Interacts with DRC1.</text>
</comment>
<comment type="subcellular location">
    <subcellularLocation>
        <location evidence="1">Cytoplasm</location>
        <location evidence="1">Cytoskeleton</location>
        <location evidence="1">Flagellum basal body</location>
    </subcellularLocation>
    <subcellularLocation>
        <location evidence="1">Cell projection</location>
        <location evidence="1">Cilium</location>
        <location evidence="1">Flagellum</location>
    </subcellularLocation>
    <subcellularLocation>
        <location evidence="1">Cytoplasm</location>
        <location evidence="1">Cytoskeleton</location>
        <location evidence="1">Flagellum axoneme</location>
    </subcellularLocation>
</comment>
<comment type="similarity">
    <text>Belongs to the DRC2 family.</text>
</comment>
<organism>
    <name type="scientific">Rattus norvegicus</name>
    <name type="common">Rat</name>
    <dbReference type="NCBI Taxonomy" id="10116"/>
    <lineage>
        <taxon>Eukaryota</taxon>
        <taxon>Metazoa</taxon>
        <taxon>Chordata</taxon>
        <taxon>Craniata</taxon>
        <taxon>Vertebrata</taxon>
        <taxon>Euteleostomi</taxon>
        <taxon>Mammalia</taxon>
        <taxon>Eutheria</taxon>
        <taxon>Euarchontoglires</taxon>
        <taxon>Glires</taxon>
        <taxon>Rodentia</taxon>
        <taxon>Myomorpha</taxon>
        <taxon>Muroidea</taxon>
        <taxon>Muridae</taxon>
        <taxon>Murinae</taxon>
        <taxon>Rattus</taxon>
    </lineage>
</organism>
<name>DRC2_RAT</name>
<gene>
    <name type="primary">Ccdc65</name>
    <name evidence="2" type="synonym">Drc2</name>
</gene>
<reference key="1">
    <citation type="journal article" date="2004" name="Genome Res.">
        <title>The status, quality, and expansion of the NIH full-length cDNA project: the Mammalian Gene Collection (MGC).</title>
        <authorList>
            <consortium name="The MGC Project Team"/>
        </authorList>
    </citation>
    <scope>NUCLEOTIDE SEQUENCE [LARGE SCALE MRNA]</scope>
    <source>
        <tissue>Testis</tissue>
    </source>
</reference>
<feature type="chain" id="PRO_0000284781" description="Dynein regulatory complex subunit 2">
    <location>
        <begin position="1"/>
        <end position="502"/>
    </location>
</feature>
<feature type="coiled-coil region" evidence="3">
    <location>
        <begin position="96"/>
        <end position="160"/>
    </location>
</feature>
<feature type="coiled-coil region" evidence="3">
    <location>
        <begin position="252"/>
        <end position="285"/>
    </location>
</feature>
<accession>Q5XIJ8</accession>
<sequence length="502" mass="59004">MPKKGKKPKLPLTDEEQLILFQQKLLADEEAAKKKERLLTQFLKDKLAKEEHNSSLNLNKINTQWRTVLREVKTRELHKDIEILSQIFERVVDCKDSVIKSLARDLTEAEEQYAHALRGHLHNVDQLLTLQRRRLSLLEENYNMELEVLTKEFETERKAILDHHDKEIHYLHDVFMAMEQNYVDSEYESKLEFQSMWDDLKNKNLEEKHFLRLQLENVVEDLWRRFQDALKNYTDATEDRKIAFETLKVKDEKSSKEIEVQMKKIQRLQEAISALKGKIVAHSREGEWQNQCIRNDKELVHVQLRKLKIQRTQARTESQENLVKLTLESNATLKALKKVVEKGEKILKLAEICRKFETEEEKVLPFYSSALTPEEQEEVEIQSQEEITEDLAKIMMDYLGMENFWKRYNKVKLEVLSLQHRRLQLLDISSKLREMLKQYLDGISVSDEVLSRLNPLFIVNHKSNLPQLPPSAAQPGGDRGPGGDRRLTYNVIEAAHIASHIL</sequence>
<dbReference type="EMBL" id="BC083683">
    <property type="protein sequence ID" value="AAH83683.1"/>
    <property type="molecule type" value="mRNA"/>
</dbReference>
<dbReference type="RefSeq" id="NP_001014225.1">
    <property type="nucleotide sequence ID" value="NM_001014203.1"/>
</dbReference>
<dbReference type="SMR" id="Q5XIJ8"/>
<dbReference type="FunCoup" id="Q5XIJ8">
    <property type="interactions" value="227"/>
</dbReference>
<dbReference type="STRING" id="10116.ENSRNOP00000071850"/>
<dbReference type="PhosphoSitePlus" id="Q5XIJ8"/>
<dbReference type="PaxDb" id="10116-ENSRNOP00000050912"/>
<dbReference type="Ensembl" id="ENSRNOT00000090760.2">
    <property type="protein sequence ID" value="ENSRNOP00000071850.1"/>
    <property type="gene ID" value="ENSRNOG00000058916.2"/>
</dbReference>
<dbReference type="GeneID" id="362994"/>
<dbReference type="KEGG" id="rno:362994"/>
<dbReference type="UCSC" id="RGD:1595842">
    <property type="organism name" value="rat"/>
</dbReference>
<dbReference type="AGR" id="RGD:1595842"/>
<dbReference type="CTD" id="85478"/>
<dbReference type="RGD" id="1595842">
    <property type="gene designation" value="Ccdc65"/>
</dbReference>
<dbReference type="eggNOG" id="ENOG502QQDD">
    <property type="taxonomic scope" value="Eukaryota"/>
</dbReference>
<dbReference type="GeneTree" id="ENSGT00940000153804"/>
<dbReference type="HOGENOM" id="CLU_026536_1_0_1"/>
<dbReference type="InParanoid" id="Q5XIJ8"/>
<dbReference type="OMA" id="WEYLDLF"/>
<dbReference type="OrthoDB" id="83020at9989"/>
<dbReference type="PhylomeDB" id="Q5XIJ8"/>
<dbReference type="TreeFam" id="TF326074"/>
<dbReference type="PRO" id="PR:Q5XIJ8"/>
<dbReference type="Proteomes" id="UP000002494">
    <property type="component" value="Chromosome 7"/>
</dbReference>
<dbReference type="Bgee" id="ENSRNOG00000058916">
    <property type="expression patterns" value="Expressed in testis and 19 other cell types or tissues"/>
</dbReference>
<dbReference type="GO" id="GO:0005858">
    <property type="term" value="C:axonemal dynein complex"/>
    <property type="evidence" value="ECO:0007669"/>
    <property type="project" value="InterPro"/>
</dbReference>
<dbReference type="GO" id="GO:0005930">
    <property type="term" value="C:axoneme"/>
    <property type="evidence" value="ECO:0000318"/>
    <property type="project" value="GO_Central"/>
</dbReference>
<dbReference type="GO" id="GO:0036064">
    <property type="term" value="C:ciliary basal body"/>
    <property type="evidence" value="ECO:0000266"/>
    <property type="project" value="RGD"/>
</dbReference>
<dbReference type="GO" id="GO:0031514">
    <property type="term" value="C:motile cilium"/>
    <property type="evidence" value="ECO:0007669"/>
    <property type="project" value="UniProtKB-SubCell"/>
</dbReference>
<dbReference type="GO" id="GO:0070286">
    <property type="term" value="P:axonemal dynein complex assembly"/>
    <property type="evidence" value="ECO:0000318"/>
    <property type="project" value="GO_Central"/>
</dbReference>
<dbReference type="GO" id="GO:0060271">
    <property type="term" value="P:cilium assembly"/>
    <property type="evidence" value="ECO:0000266"/>
    <property type="project" value="RGD"/>
</dbReference>
<dbReference type="GO" id="GO:0060285">
    <property type="term" value="P:cilium-dependent cell motility"/>
    <property type="evidence" value="ECO:0000318"/>
    <property type="project" value="GO_Central"/>
</dbReference>
<dbReference type="GO" id="GO:0003352">
    <property type="term" value="P:regulation of cilium movement"/>
    <property type="evidence" value="ECO:0000266"/>
    <property type="project" value="RGD"/>
</dbReference>
<dbReference type="InterPro" id="IPR039505">
    <property type="entry name" value="DRC1/2_N"/>
</dbReference>
<dbReference type="InterPro" id="IPR039750">
    <property type="entry name" value="DRC1/DRC2"/>
</dbReference>
<dbReference type="PANTHER" id="PTHR21625:SF0">
    <property type="entry name" value="DYNEIN REGULATORY COMPLEX SUBUNIT 2"/>
    <property type="match status" value="1"/>
</dbReference>
<dbReference type="PANTHER" id="PTHR21625">
    <property type="entry name" value="NYD-SP28 PROTEIN"/>
    <property type="match status" value="1"/>
</dbReference>
<dbReference type="Pfam" id="PF14772">
    <property type="entry name" value="NYD-SP28"/>
    <property type="match status" value="1"/>
</dbReference>
<proteinExistence type="evidence at transcript level"/>
<keyword id="KW-0966">Cell projection</keyword>
<keyword id="KW-0969">Cilium</keyword>
<keyword id="KW-0175">Coiled coil</keyword>
<keyword id="KW-0963">Cytoplasm</keyword>
<keyword id="KW-0206">Cytoskeleton</keyword>
<keyword id="KW-0282">Flagellum</keyword>
<keyword id="KW-1185">Reference proteome</keyword>
<evidence type="ECO:0000250" key="1">
    <source>
        <dbReference type="UniProtKB" id="A8JB22"/>
    </source>
</evidence>
<evidence type="ECO:0000250" key="2">
    <source>
        <dbReference type="UniProtKB" id="Q8IXS2"/>
    </source>
</evidence>
<evidence type="ECO:0000255" key="3"/>
<protein>
    <recommendedName>
        <fullName evidence="2">Dynein regulatory complex subunit 2</fullName>
    </recommendedName>
    <alternativeName>
        <fullName>Coiled-coil domain-containing protein 65</fullName>
    </alternativeName>
</protein>